<reference key="1">
    <citation type="journal article" date="2004" name="Proc. Natl. Acad. Sci. U.S.A.">
        <title>Hematopoietic gene expression profile in zebrafish kidney marrow.</title>
        <authorList>
            <person name="Song H.-D."/>
            <person name="Sun X.-J."/>
            <person name="Deng M."/>
            <person name="Zhang G.-W."/>
            <person name="Zhou Y."/>
            <person name="Wu X.-Y."/>
            <person name="Sheng Y."/>
            <person name="Chen Y."/>
            <person name="Ruan Z."/>
            <person name="Jiang C.-L."/>
            <person name="Fan H.-Y."/>
            <person name="Zon L.I."/>
            <person name="Kanki J.P."/>
            <person name="Liu T.X."/>
            <person name="Look A.T."/>
            <person name="Chen Z."/>
        </authorList>
    </citation>
    <scope>NUCLEOTIDE SEQUENCE [LARGE SCALE MRNA] (ISOFORMS 1 AND 2)</scope>
    <source>
        <tissue>Kidney marrow</tissue>
    </source>
</reference>
<reference key="2">
    <citation type="submission" date="2004-11" db="EMBL/GenBank/DDBJ databases">
        <authorList>
            <consortium name="NIH - Zebrafish Gene Collection (ZGC) project"/>
        </authorList>
    </citation>
    <scope>NUCLEOTIDE SEQUENCE [LARGE SCALE MRNA] (ISOFORMS 1 AND 2)</scope>
    <source>
        <tissue>Eye</tissue>
        <tissue>Kidney</tissue>
    </source>
</reference>
<gene>
    <name type="primary">hagh</name>
    <name type="ORF">zgc:73161</name>
</gene>
<feature type="transit peptide" description="Mitochondrion" evidence="2">
    <location>
        <begin position="1"/>
        <end status="unknown"/>
    </location>
</feature>
<feature type="chain" id="PRO_0000382743" description="Hydroxyacylglutathione hydrolase, mitochondrial">
    <location>
        <begin status="unknown"/>
        <end position="303"/>
    </location>
</feature>
<feature type="binding site" evidence="1">
    <location>
        <position position="97"/>
    </location>
    <ligand>
        <name>Zn(2+)</name>
        <dbReference type="ChEBI" id="CHEBI:29105"/>
        <label>1</label>
    </ligand>
</feature>
<feature type="binding site" evidence="1">
    <location>
        <position position="99"/>
    </location>
    <ligand>
        <name>Zn(2+)</name>
        <dbReference type="ChEBI" id="CHEBI:29105"/>
        <label>1</label>
    </ligand>
</feature>
<feature type="binding site" evidence="1">
    <location>
        <position position="101"/>
    </location>
    <ligand>
        <name>Zn(2+)</name>
        <dbReference type="ChEBI" id="CHEBI:29105"/>
        <label>2</label>
    </ligand>
</feature>
<feature type="binding site" evidence="1">
    <location>
        <position position="102"/>
    </location>
    <ligand>
        <name>Zn(2+)</name>
        <dbReference type="ChEBI" id="CHEBI:29105"/>
        <label>2</label>
    </ligand>
</feature>
<feature type="binding site" evidence="1">
    <location>
        <position position="153"/>
    </location>
    <ligand>
        <name>Zn(2+)</name>
        <dbReference type="ChEBI" id="CHEBI:29105"/>
        <label>1</label>
    </ligand>
</feature>
<feature type="binding site" evidence="1">
    <location>
        <position position="177"/>
    </location>
    <ligand>
        <name>Zn(2+)</name>
        <dbReference type="ChEBI" id="CHEBI:29105"/>
        <label>1</label>
    </ligand>
</feature>
<feature type="binding site" evidence="1">
    <location>
        <position position="177"/>
    </location>
    <ligand>
        <name>Zn(2+)</name>
        <dbReference type="ChEBI" id="CHEBI:29105"/>
        <label>2</label>
    </ligand>
</feature>
<feature type="binding site" evidence="1">
    <location>
        <begin position="186"/>
        <end position="188"/>
    </location>
    <ligand>
        <name>substrate</name>
    </ligand>
</feature>
<feature type="binding site" evidence="1">
    <location>
        <begin position="216"/>
        <end position="218"/>
    </location>
    <ligand>
        <name>substrate</name>
    </ligand>
</feature>
<feature type="binding site" evidence="1">
    <location>
        <position position="216"/>
    </location>
    <ligand>
        <name>Zn(2+)</name>
        <dbReference type="ChEBI" id="CHEBI:29105"/>
        <label>2</label>
    </ligand>
</feature>
<feature type="binding site" evidence="1">
    <location>
        <begin position="292"/>
        <end position="295"/>
    </location>
    <ligand>
        <name>substrate</name>
    </ligand>
</feature>
<feature type="splice variant" id="VSP_037934" description="In isoform 2." evidence="3 4">
    <location>
        <begin position="1"/>
        <end position="43"/>
    </location>
</feature>
<dbReference type="EC" id="3.1.2.6" evidence="1"/>
<dbReference type="EMBL" id="AY398356">
    <property type="protein sequence ID" value="AAQ97789.1"/>
    <property type="status" value="ALT_INIT"/>
    <property type="molecule type" value="mRNA"/>
</dbReference>
<dbReference type="EMBL" id="BC060913">
    <property type="protein sequence ID" value="AAH60913.1"/>
    <property type="status" value="ALT_INIT"/>
    <property type="molecule type" value="mRNA"/>
</dbReference>
<dbReference type="EMBL" id="BC066607">
    <property type="protein sequence ID" value="AAH66607.1"/>
    <property type="status" value="ALT_INIT"/>
    <property type="molecule type" value="mRNA"/>
</dbReference>
<dbReference type="RefSeq" id="NP_956337.2">
    <molecule id="Q6P963-1"/>
    <property type="nucleotide sequence ID" value="NM_200043.3"/>
</dbReference>
<dbReference type="RefSeq" id="XP_005163922.1">
    <molecule id="Q6P963-1"/>
    <property type="nucleotide sequence ID" value="XM_005163865.5"/>
</dbReference>
<dbReference type="RefSeq" id="XP_009297606.1">
    <property type="nucleotide sequence ID" value="XM_009299331.2"/>
</dbReference>
<dbReference type="SMR" id="Q6P963"/>
<dbReference type="FunCoup" id="Q6P963">
    <property type="interactions" value="2383"/>
</dbReference>
<dbReference type="STRING" id="7955.ENSDARP00000034038"/>
<dbReference type="PaxDb" id="7955-ENSDARP00000034038"/>
<dbReference type="Ensembl" id="ENSDART00000034373">
    <molecule id="Q6P963-1"/>
    <property type="protein sequence ID" value="ENSDARP00000034038"/>
    <property type="gene ID" value="ENSDARG00000025338"/>
</dbReference>
<dbReference type="Ensembl" id="ENSDART00000134208">
    <molecule id="Q6P963-1"/>
    <property type="protein sequence ID" value="ENSDARP00000122766"/>
    <property type="gene ID" value="ENSDARG00000025338"/>
</dbReference>
<dbReference type="GeneID" id="336977"/>
<dbReference type="KEGG" id="dre:336977"/>
<dbReference type="AGR" id="ZFIN:ZDB-GENE-030131-8921"/>
<dbReference type="CTD" id="3029"/>
<dbReference type="ZFIN" id="ZDB-GENE-030131-8921">
    <property type="gene designation" value="hagh"/>
</dbReference>
<dbReference type="eggNOG" id="KOG0813">
    <property type="taxonomic scope" value="Eukaryota"/>
</dbReference>
<dbReference type="HOGENOM" id="CLU_030571_4_0_1"/>
<dbReference type="InParanoid" id="Q6P963"/>
<dbReference type="OMA" id="NYIWLLQ"/>
<dbReference type="OrthoDB" id="515692at2759"/>
<dbReference type="PhylomeDB" id="Q6P963"/>
<dbReference type="TreeFam" id="TF105273"/>
<dbReference type="Reactome" id="R-DRE-70268">
    <property type="pathway name" value="Pyruvate metabolism"/>
</dbReference>
<dbReference type="PRO" id="PR:Q6P963"/>
<dbReference type="Proteomes" id="UP000000437">
    <property type="component" value="Chromosome 3"/>
</dbReference>
<dbReference type="Bgee" id="ENSDARG00000025338">
    <property type="expression patterns" value="Expressed in liver and 23 other cell types or tissues"/>
</dbReference>
<dbReference type="GO" id="GO:0005759">
    <property type="term" value="C:mitochondrial matrix"/>
    <property type="evidence" value="ECO:0007669"/>
    <property type="project" value="UniProtKB-SubCell"/>
</dbReference>
<dbReference type="GO" id="GO:0005739">
    <property type="term" value="C:mitochondrion"/>
    <property type="evidence" value="ECO:0000318"/>
    <property type="project" value="GO_Central"/>
</dbReference>
<dbReference type="GO" id="GO:0004416">
    <property type="term" value="F:hydroxyacylglutathione hydrolase activity"/>
    <property type="evidence" value="ECO:0000250"/>
    <property type="project" value="UniProtKB"/>
</dbReference>
<dbReference type="GO" id="GO:0046872">
    <property type="term" value="F:metal ion binding"/>
    <property type="evidence" value="ECO:0007669"/>
    <property type="project" value="UniProtKB-KW"/>
</dbReference>
<dbReference type="GO" id="GO:0006749">
    <property type="term" value="P:glutathione metabolic process"/>
    <property type="evidence" value="ECO:0000318"/>
    <property type="project" value="GO_Central"/>
</dbReference>
<dbReference type="GO" id="GO:0019243">
    <property type="term" value="P:methylglyoxal catabolic process to D-lactate via S-lactoyl-glutathione"/>
    <property type="evidence" value="ECO:0007669"/>
    <property type="project" value="InterPro"/>
</dbReference>
<dbReference type="CDD" id="cd07723">
    <property type="entry name" value="hydroxyacylglutathione_hydrolase_MBL-fold"/>
    <property type="match status" value="1"/>
</dbReference>
<dbReference type="FunFam" id="3.60.15.10:FF:000019">
    <property type="entry name" value="Hydroxyacylglutathione hydrolase, mitochondrial"/>
    <property type="match status" value="1"/>
</dbReference>
<dbReference type="Gene3D" id="3.60.15.10">
    <property type="entry name" value="Ribonuclease Z/Hydroxyacylglutathione hydrolase-like"/>
    <property type="match status" value="1"/>
</dbReference>
<dbReference type="HAMAP" id="MF_01374">
    <property type="entry name" value="Glyoxalase_2"/>
    <property type="match status" value="1"/>
</dbReference>
<dbReference type="InterPro" id="IPR035680">
    <property type="entry name" value="Clx_II_MBL"/>
</dbReference>
<dbReference type="InterPro" id="IPR032282">
    <property type="entry name" value="HAGH_C"/>
</dbReference>
<dbReference type="InterPro" id="IPR017782">
    <property type="entry name" value="Hydroxyacylglutathione_Hdrlase"/>
</dbReference>
<dbReference type="InterPro" id="IPR001279">
    <property type="entry name" value="Metallo-B-lactamas"/>
</dbReference>
<dbReference type="InterPro" id="IPR036866">
    <property type="entry name" value="RibonucZ/Hydroxyglut_hydro"/>
</dbReference>
<dbReference type="NCBIfam" id="TIGR03413">
    <property type="entry name" value="GSH_gloB"/>
    <property type="match status" value="1"/>
</dbReference>
<dbReference type="PANTHER" id="PTHR11935">
    <property type="entry name" value="BETA LACTAMASE DOMAIN"/>
    <property type="match status" value="1"/>
</dbReference>
<dbReference type="PANTHER" id="PTHR11935:SF80">
    <property type="entry name" value="HYDROXYACYLGLUTATHIONE HYDROLASE, MITOCHONDRIAL"/>
    <property type="match status" value="1"/>
</dbReference>
<dbReference type="Pfam" id="PF16123">
    <property type="entry name" value="HAGH_C"/>
    <property type="match status" value="1"/>
</dbReference>
<dbReference type="Pfam" id="PF00753">
    <property type="entry name" value="Lactamase_B"/>
    <property type="match status" value="1"/>
</dbReference>
<dbReference type="PIRSF" id="PIRSF005457">
    <property type="entry name" value="Glx"/>
    <property type="match status" value="1"/>
</dbReference>
<dbReference type="SMART" id="SM00849">
    <property type="entry name" value="Lactamase_B"/>
    <property type="match status" value="1"/>
</dbReference>
<dbReference type="SUPFAM" id="SSF56281">
    <property type="entry name" value="Metallo-hydrolase/oxidoreductase"/>
    <property type="match status" value="1"/>
</dbReference>
<evidence type="ECO:0000250" key="1">
    <source>
        <dbReference type="UniProtKB" id="Q16775"/>
    </source>
</evidence>
<evidence type="ECO:0000255" key="2"/>
<evidence type="ECO:0000303" key="3">
    <source>
    </source>
</evidence>
<evidence type="ECO:0000303" key="4">
    <source ref="2"/>
</evidence>
<evidence type="ECO:0000305" key="5"/>
<organism>
    <name type="scientific">Danio rerio</name>
    <name type="common">Zebrafish</name>
    <name type="synonym">Brachydanio rerio</name>
    <dbReference type="NCBI Taxonomy" id="7955"/>
    <lineage>
        <taxon>Eukaryota</taxon>
        <taxon>Metazoa</taxon>
        <taxon>Chordata</taxon>
        <taxon>Craniata</taxon>
        <taxon>Vertebrata</taxon>
        <taxon>Euteleostomi</taxon>
        <taxon>Actinopterygii</taxon>
        <taxon>Neopterygii</taxon>
        <taxon>Teleostei</taxon>
        <taxon>Ostariophysi</taxon>
        <taxon>Cypriniformes</taxon>
        <taxon>Danionidae</taxon>
        <taxon>Danioninae</taxon>
        <taxon>Danio</taxon>
    </lineage>
</organism>
<proteinExistence type="evidence at transcript level"/>
<sequence>MWFRSLAVSACTVGVLGALSQKFAPTALFHSAIRKSSLVEQSDMKVELLPALTDNYMYLLIDEETKEAAIVDPVEPQKVVDAVKKHGVKLKTVLTTHHHWDHAGGNEKLVKLMPGLTVYGGDDRVGALTQKVTHYNTFKVGSLNVKCLFTPCHTSGHICYFVTKENSTEAPAVFTGDTLFVAGCGKFFEGTADEMYKALIEVLGRLPPETRVYCGHEYTINNLKFARHVEPNNEVIRTKLAWAKEKYDNGEPTIPSTVAEEFTFNPFMRVREKSVLEHAGTSDPIEAMRSIRKEKDGFRVPKN</sequence>
<comment type="function">
    <text evidence="1">Thiolesterase that catalyzes the hydrolysis of S-D-lactoyl-glutathione to form glutathione and D-lactic acid.</text>
</comment>
<comment type="catalytic activity">
    <reaction evidence="1">
        <text>an S-(2-hydroxyacyl)glutathione + H2O = a 2-hydroxy carboxylate + glutathione + H(+)</text>
        <dbReference type="Rhea" id="RHEA:21864"/>
        <dbReference type="ChEBI" id="CHEBI:15377"/>
        <dbReference type="ChEBI" id="CHEBI:15378"/>
        <dbReference type="ChEBI" id="CHEBI:57925"/>
        <dbReference type="ChEBI" id="CHEBI:58896"/>
        <dbReference type="ChEBI" id="CHEBI:71261"/>
        <dbReference type="EC" id="3.1.2.6"/>
    </reaction>
    <physiologicalReaction direction="left-to-right" evidence="1">
        <dbReference type="Rhea" id="RHEA:21865"/>
    </physiologicalReaction>
</comment>
<comment type="catalytic activity">
    <reaction evidence="1">
        <text>(R)-S-lactoylglutathione + H2O = (R)-lactate + glutathione + H(+)</text>
        <dbReference type="Rhea" id="RHEA:25245"/>
        <dbReference type="ChEBI" id="CHEBI:15377"/>
        <dbReference type="ChEBI" id="CHEBI:15378"/>
        <dbReference type="ChEBI" id="CHEBI:16004"/>
        <dbReference type="ChEBI" id="CHEBI:57474"/>
        <dbReference type="ChEBI" id="CHEBI:57925"/>
        <dbReference type="EC" id="3.1.2.6"/>
    </reaction>
    <physiologicalReaction direction="left-to-right" evidence="1">
        <dbReference type="Rhea" id="RHEA:25246"/>
    </physiologicalReaction>
</comment>
<comment type="cofactor">
    <cofactor evidence="1">
        <name>Zn(2+)</name>
        <dbReference type="ChEBI" id="CHEBI:29105"/>
    </cofactor>
    <text evidence="1">Binds 2 Zn(2+) ions per subunit.</text>
</comment>
<comment type="subunit">
    <text evidence="1">Monomer.</text>
</comment>
<comment type="subcellular location">
    <molecule>Isoform 1</molecule>
    <subcellularLocation>
        <location evidence="1">Mitochondrion matrix</location>
    </subcellularLocation>
</comment>
<comment type="subcellular location">
    <molecule>Isoform 2</molecule>
    <subcellularLocation>
        <location evidence="1">Cytoplasm</location>
    </subcellularLocation>
</comment>
<comment type="alternative products">
    <event type="alternative initiation"/>
    <isoform>
        <id>Q6P963-1</id>
        <name>1</name>
        <sequence type="displayed"/>
    </isoform>
    <isoform>
        <id>Q6P963-2</id>
        <name>2</name>
        <sequence type="described" ref="VSP_037934"/>
    </isoform>
</comment>
<comment type="miscellaneous">
    <molecule>Isoform 2</molecule>
    <text evidence="5">Produced by alternative initiation at Met-44 of isoform 1. Alternative initiation has been proven in human.</text>
</comment>
<comment type="similarity">
    <text evidence="5">Belongs to the metallo-beta-lactamase superfamily. Glyoxalase II family.</text>
</comment>
<comment type="caution">
    <text evidence="5">Only one single gene encoding glyoxalase II has been identified in vertebrates. In yeast and higher plants, separate genes encode the cytosolic and mitochondrial forms of glyoxalase II.</text>
</comment>
<comment type="sequence caution" evidence="5">
    <conflict type="erroneous initiation">
        <sequence resource="EMBL-CDS" id="AAH60913"/>
    </conflict>
</comment>
<comment type="sequence caution" evidence="5">
    <conflict type="erroneous initiation">
        <sequence resource="EMBL-CDS" id="AAH66607"/>
    </conflict>
</comment>
<comment type="sequence caution" evidence="5">
    <conflict type="erroneous initiation">
        <sequence resource="EMBL-CDS" id="AAQ97789"/>
    </conflict>
</comment>
<accession>Q6P963</accession>
<name>GLO2_DANRE</name>
<protein>
    <recommendedName>
        <fullName>Hydroxyacylglutathione hydrolase, mitochondrial</fullName>
        <ecNumber evidence="1">3.1.2.6</ecNumber>
    </recommendedName>
    <alternativeName>
        <fullName>Glyoxalase II</fullName>
        <shortName>Glx II</shortName>
    </alternativeName>
</protein>
<keyword id="KW-0024">Alternative initiation</keyword>
<keyword id="KW-0963">Cytoplasm</keyword>
<keyword id="KW-0378">Hydrolase</keyword>
<keyword id="KW-0479">Metal-binding</keyword>
<keyword id="KW-0496">Mitochondrion</keyword>
<keyword id="KW-1185">Reference proteome</keyword>
<keyword id="KW-0809">Transit peptide</keyword>
<keyword id="KW-0862">Zinc</keyword>